<keyword id="KW-0067">ATP-binding</keyword>
<keyword id="KW-0963">Cytoplasm</keyword>
<keyword id="KW-0210">Decarboxylase</keyword>
<keyword id="KW-0312">Gluconeogenesis</keyword>
<keyword id="KW-0456">Lyase</keyword>
<keyword id="KW-0464">Manganese</keyword>
<keyword id="KW-0479">Metal-binding</keyword>
<keyword id="KW-0547">Nucleotide-binding</keyword>
<feature type="chain" id="PRO_0000236925" description="Phosphoenolpyruvate carboxykinase (ATP)">
    <location>
        <begin position="1"/>
        <end position="538"/>
    </location>
</feature>
<feature type="binding site" evidence="1">
    <location>
        <position position="64"/>
    </location>
    <ligand>
        <name>substrate</name>
    </ligand>
</feature>
<feature type="binding site" evidence="1">
    <location>
        <position position="205"/>
    </location>
    <ligand>
        <name>substrate</name>
    </ligand>
</feature>
<feature type="binding site" evidence="1">
    <location>
        <position position="211"/>
    </location>
    <ligand>
        <name>ATP</name>
        <dbReference type="ChEBI" id="CHEBI:30616"/>
    </ligand>
</feature>
<feature type="binding site" evidence="1">
    <location>
        <position position="211"/>
    </location>
    <ligand>
        <name>Mn(2+)</name>
        <dbReference type="ChEBI" id="CHEBI:29035"/>
    </ligand>
</feature>
<feature type="binding site" evidence="1">
    <location>
        <position position="211"/>
    </location>
    <ligand>
        <name>substrate</name>
    </ligand>
</feature>
<feature type="binding site" evidence="1">
    <location>
        <position position="230"/>
    </location>
    <ligand>
        <name>ATP</name>
        <dbReference type="ChEBI" id="CHEBI:30616"/>
    </ligand>
</feature>
<feature type="binding site" evidence="1">
    <location>
        <position position="230"/>
    </location>
    <ligand>
        <name>Mn(2+)</name>
        <dbReference type="ChEBI" id="CHEBI:29035"/>
    </ligand>
</feature>
<feature type="binding site" evidence="1">
    <location>
        <begin position="246"/>
        <end position="254"/>
    </location>
    <ligand>
        <name>ATP</name>
        <dbReference type="ChEBI" id="CHEBI:30616"/>
    </ligand>
</feature>
<feature type="binding site" evidence="1">
    <location>
        <position position="267"/>
    </location>
    <ligand>
        <name>Mn(2+)</name>
        <dbReference type="ChEBI" id="CHEBI:29035"/>
    </ligand>
</feature>
<feature type="binding site" evidence="1">
    <location>
        <position position="295"/>
    </location>
    <ligand>
        <name>ATP</name>
        <dbReference type="ChEBI" id="CHEBI:30616"/>
    </ligand>
</feature>
<feature type="binding site" evidence="1">
    <location>
        <position position="331"/>
    </location>
    <ligand>
        <name>ATP</name>
        <dbReference type="ChEBI" id="CHEBI:30616"/>
    </ligand>
</feature>
<feature type="binding site" evidence="1">
    <location>
        <position position="331"/>
    </location>
    <ligand>
        <name>substrate</name>
    </ligand>
</feature>
<feature type="binding site" evidence="1">
    <location>
        <begin position="447"/>
        <end position="448"/>
    </location>
    <ligand>
        <name>ATP</name>
        <dbReference type="ChEBI" id="CHEBI:30616"/>
    </ligand>
</feature>
<feature type="binding site" evidence="1">
    <location>
        <position position="453"/>
    </location>
    <ligand>
        <name>ATP</name>
        <dbReference type="ChEBI" id="CHEBI:30616"/>
    </ligand>
</feature>
<gene>
    <name evidence="1" type="primary">pckA</name>
    <name type="ordered locus">NTHI0973</name>
</gene>
<comment type="function">
    <text evidence="1">Involved in the gluconeogenesis. Catalyzes the conversion of oxaloacetate (OAA) to phosphoenolpyruvate (PEP) through direct phosphoryl transfer between the nucleoside triphosphate and OAA.</text>
</comment>
<comment type="catalytic activity">
    <reaction evidence="1">
        <text>oxaloacetate + ATP = phosphoenolpyruvate + ADP + CO2</text>
        <dbReference type="Rhea" id="RHEA:18617"/>
        <dbReference type="ChEBI" id="CHEBI:16452"/>
        <dbReference type="ChEBI" id="CHEBI:16526"/>
        <dbReference type="ChEBI" id="CHEBI:30616"/>
        <dbReference type="ChEBI" id="CHEBI:58702"/>
        <dbReference type="ChEBI" id="CHEBI:456216"/>
        <dbReference type="EC" id="4.1.1.49"/>
    </reaction>
</comment>
<comment type="cofactor">
    <cofactor evidence="1">
        <name>Mn(2+)</name>
        <dbReference type="ChEBI" id="CHEBI:29035"/>
    </cofactor>
    <text evidence="1">Binds 1 Mn(2+) ion per subunit.</text>
</comment>
<comment type="pathway">
    <text evidence="1">Carbohydrate biosynthesis; gluconeogenesis.</text>
</comment>
<comment type="subunit">
    <text evidence="1">Monomer.</text>
</comment>
<comment type="subcellular location">
    <subcellularLocation>
        <location evidence="1">Cytoplasm</location>
    </subcellularLocation>
</comment>
<comment type="similarity">
    <text evidence="1">Belongs to the phosphoenolpyruvate carboxykinase (ATP) family.</text>
</comment>
<organism>
    <name type="scientific">Haemophilus influenzae (strain 86-028NP)</name>
    <dbReference type="NCBI Taxonomy" id="281310"/>
    <lineage>
        <taxon>Bacteria</taxon>
        <taxon>Pseudomonadati</taxon>
        <taxon>Pseudomonadota</taxon>
        <taxon>Gammaproteobacteria</taxon>
        <taxon>Pasteurellales</taxon>
        <taxon>Pasteurellaceae</taxon>
        <taxon>Haemophilus</taxon>
    </lineage>
</organism>
<name>PCKA_HAEI8</name>
<reference key="1">
    <citation type="journal article" date="2005" name="J. Bacteriol.">
        <title>Genomic sequence of an otitis media isolate of nontypeable Haemophilus influenzae: comparative study with H. influenzae serotype d, strain KW20.</title>
        <authorList>
            <person name="Harrison A."/>
            <person name="Dyer D.W."/>
            <person name="Gillaspy A."/>
            <person name="Ray W.C."/>
            <person name="Mungur R."/>
            <person name="Carson M.B."/>
            <person name="Zhong H."/>
            <person name="Gipson J."/>
            <person name="Gipson M."/>
            <person name="Johnson L.S."/>
            <person name="Lewis L."/>
            <person name="Bakaletz L.O."/>
            <person name="Munson R.S. Jr."/>
        </authorList>
    </citation>
    <scope>NUCLEOTIDE SEQUENCE [LARGE SCALE GENOMIC DNA]</scope>
    <source>
        <strain>86-028NP</strain>
    </source>
</reference>
<evidence type="ECO:0000255" key="1">
    <source>
        <dbReference type="HAMAP-Rule" id="MF_00453"/>
    </source>
</evidence>
<protein>
    <recommendedName>
        <fullName evidence="1">Phosphoenolpyruvate carboxykinase (ATP)</fullName>
        <shortName evidence="1">PCK</shortName>
        <shortName evidence="1">PEP carboxykinase</shortName>
        <shortName evidence="1">PEPCK</shortName>
        <ecNumber evidence="1">4.1.1.49</ecNumber>
    </recommendedName>
</protein>
<accession>Q4QM91</accession>
<dbReference type="EC" id="4.1.1.49" evidence="1"/>
<dbReference type="EMBL" id="CP000057">
    <property type="protein sequence ID" value="AAX87856.1"/>
    <property type="molecule type" value="Genomic_DNA"/>
</dbReference>
<dbReference type="RefSeq" id="WP_011272223.1">
    <property type="nucleotide sequence ID" value="NC_007146.2"/>
</dbReference>
<dbReference type="SMR" id="Q4QM91"/>
<dbReference type="KEGG" id="hit:NTHI0973"/>
<dbReference type="HOGENOM" id="CLU_018247_0_1_6"/>
<dbReference type="UniPathway" id="UPA00138"/>
<dbReference type="Proteomes" id="UP000002525">
    <property type="component" value="Chromosome"/>
</dbReference>
<dbReference type="GO" id="GO:0005829">
    <property type="term" value="C:cytosol"/>
    <property type="evidence" value="ECO:0007669"/>
    <property type="project" value="TreeGrafter"/>
</dbReference>
<dbReference type="GO" id="GO:0005524">
    <property type="term" value="F:ATP binding"/>
    <property type="evidence" value="ECO:0007669"/>
    <property type="project" value="UniProtKB-UniRule"/>
</dbReference>
<dbReference type="GO" id="GO:0046872">
    <property type="term" value="F:metal ion binding"/>
    <property type="evidence" value="ECO:0007669"/>
    <property type="project" value="UniProtKB-KW"/>
</dbReference>
<dbReference type="GO" id="GO:0004612">
    <property type="term" value="F:phosphoenolpyruvate carboxykinase (ATP) activity"/>
    <property type="evidence" value="ECO:0007669"/>
    <property type="project" value="UniProtKB-UniRule"/>
</dbReference>
<dbReference type="GO" id="GO:0006094">
    <property type="term" value="P:gluconeogenesis"/>
    <property type="evidence" value="ECO:0007669"/>
    <property type="project" value="UniProtKB-UniRule"/>
</dbReference>
<dbReference type="CDD" id="cd00484">
    <property type="entry name" value="PEPCK_ATP"/>
    <property type="match status" value="1"/>
</dbReference>
<dbReference type="FunFam" id="2.170.8.10:FF:000001">
    <property type="entry name" value="Phosphoenolpyruvate carboxykinase (ATP)"/>
    <property type="match status" value="1"/>
</dbReference>
<dbReference type="FunFam" id="3.40.449.10:FF:000001">
    <property type="entry name" value="Phosphoenolpyruvate carboxykinase (ATP)"/>
    <property type="match status" value="1"/>
</dbReference>
<dbReference type="Gene3D" id="3.90.228.20">
    <property type="match status" value="1"/>
</dbReference>
<dbReference type="Gene3D" id="3.40.449.10">
    <property type="entry name" value="Phosphoenolpyruvate Carboxykinase, domain 1"/>
    <property type="match status" value="1"/>
</dbReference>
<dbReference type="Gene3D" id="2.170.8.10">
    <property type="entry name" value="Phosphoenolpyruvate Carboxykinase, domain 2"/>
    <property type="match status" value="1"/>
</dbReference>
<dbReference type="HAMAP" id="MF_00453">
    <property type="entry name" value="PEPCK_ATP"/>
    <property type="match status" value="1"/>
</dbReference>
<dbReference type="InterPro" id="IPR001272">
    <property type="entry name" value="PEP_carboxykinase_ATP"/>
</dbReference>
<dbReference type="InterPro" id="IPR013035">
    <property type="entry name" value="PEP_carboxykinase_C"/>
</dbReference>
<dbReference type="InterPro" id="IPR008210">
    <property type="entry name" value="PEP_carboxykinase_N"/>
</dbReference>
<dbReference type="InterPro" id="IPR015994">
    <property type="entry name" value="PEPCK_ATP_CS"/>
</dbReference>
<dbReference type="NCBIfam" id="TIGR00224">
    <property type="entry name" value="pckA"/>
    <property type="match status" value="1"/>
</dbReference>
<dbReference type="NCBIfam" id="NF006819">
    <property type="entry name" value="PRK09344.1-1"/>
    <property type="match status" value="1"/>
</dbReference>
<dbReference type="NCBIfam" id="NF006820">
    <property type="entry name" value="PRK09344.1-2"/>
    <property type="match status" value="1"/>
</dbReference>
<dbReference type="NCBIfam" id="NF006821">
    <property type="entry name" value="PRK09344.1-3"/>
    <property type="match status" value="1"/>
</dbReference>
<dbReference type="PANTHER" id="PTHR30031:SF0">
    <property type="entry name" value="PHOSPHOENOLPYRUVATE CARBOXYKINASE (ATP)"/>
    <property type="match status" value="1"/>
</dbReference>
<dbReference type="PANTHER" id="PTHR30031">
    <property type="entry name" value="PHOSPHOENOLPYRUVATE CARBOXYKINASE ATP"/>
    <property type="match status" value="1"/>
</dbReference>
<dbReference type="Pfam" id="PF01293">
    <property type="entry name" value="PEPCK_ATP"/>
    <property type="match status" value="1"/>
</dbReference>
<dbReference type="PIRSF" id="PIRSF006294">
    <property type="entry name" value="PEP_crbxkin"/>
    <property type="match status" value="1"/>
</dbReference>
<dbReference type="SUPFAM" id="SSF68923">
    <property type="entry name" value="PEP carboxykinase N-terminal domain"/>
    <property type="match status" value="1"/>
</dbReference>
<dbReference type="SUPFAM" id="SSF53795">
    <property type="entry name" value="PEP carboxykinase-like"/>
    <property type="match status" value="1"/>
</dbReference>
<dbReference type="PROSITE" id="PS00532">
    <property type="entry name" value="PEPCK_ATP"/>
    <property type="match status" value="1"/>
</dbReference>
<sequence>MTDLNKVVKELEALGIYDVKEVVYNPSYEQLFEEETKPGLEGFEKGTLTTTGAVAVDTGIFTGRSPKDKYIVLDEKTKDTVWWTSETAKNDNKPMNQATWQSLKDLVTNQLSRKRLFVVDGFCGASEHDRIAVRIVTEVAWQAHFVKNMFIRPTEEQLKNFEPDFVVMNGSKVTNPNWKEQGLNSENFVAFNLTERIQLIGGTWYGGEMKKGMFSMMNYFLPLKGVGAMHCSANVGKDGDVAIFFGLSGTGKTTLSTDPKRELIGDDEHGWDDVGIFNFEGGCYAKTIHLSEENEPDIYHAIRRDALLENVVVRSDGSVDFDDGSKTENTRVSYPIYHIDNIVKPVSRAGHATKVIFLTADAFGVLPPVSKLTPEQTKYYFLSGFTAKLAGTERGITEPTPTFSACFGAAFLTLHPTQYAEVLVKRMQAAGAEAYLVNTGWNGTGKRISIKDTRGIIDAILDGSIEKAEMGELPIFNLAIPKALPGVDSAILDPRDTYADKAQWQSKAEDLAGRFVKNFVKYATNEEGKALIAAGPKA</sequence>
<proteinExistence type="inferred from homology"/>